<proteinExistence type="evidence at transcript level"/>
<organism evidence="5">
    <name type="scientific">Caenorhabditis elegans</name>
    <dbReference type="NCBI Taxonomy" id="6239"/>
    <lineage>
        <taxon>Eukaryota</taxon>
        <taxon>Metazoa</taxon>
        <taxon>Ecdysozoa</taxon>
        <taxon>Nematoda</taxon>
        <taxon>Chromadorea</taxon>
        <taxon>Rhabditida</taxon>
        <taxon>Rhabditina</taxon>
        <taxon>Rhabditomorpha</taxon>
        <taxon>Rhabditoidea</taxon>
        <taxon>Rhabditidae</taxon>
        <taxon>Peloderinae</taxon>
        <taxon>Caenorhabditis</taxon>
    </lineage>
</organism>
<reference evidence="5" key="1">
    <citation type="journal article" date="1998" name="Science">
        <title>Genome sequence of the nematode C. elegans: a platform for investigating biology.</title>
        <authorList>
            <consortium name="The C. elegans sequencing consortium"/>
        </authorList>
    </citation>
    <scope>NUCLEOTIDE SEQUENCE [LARGE SCALE GENOMIC DNA]</scope>
    <source>
        <strain evidence="5">Bristol N2</strain>
    </source>
</reference>
<reference evidence="4" key="2">
    <citation type="journal article" date="2011" name="J. Biol. Chem.">
        <title>STR-33, a novel G protein-coupled receptor that regulates locomotion and egg laying in Caenorhabditis elegans.</title>
        <authorList>
            <person name="Lee J.E."/>
            <person name="Jeong P.Y."/>
            <person name="Joo H.J."/>
            <person name="Kim H."/>
            <person name="Lee T."/>
            <person name="Koo H.S."/>
            <person name="Paik Y.K."/>
        </authorList>
    </citation>
    <scope>FUNCTION</scope>
    <scope>TISSUE SPECIFICITY</scope>
    <scope>DISRUPTION PHENOTYPE</scope>
</reference>
<sequence length="345" mass="39609">MTVNLRDLSRTIAEFAFLTALVCNSLLIYLTARRTKNITGAYKYMIILFALLGLIFSCTEMLARPFVHNFNASFVYFSLSNDLSEFKSLVQMLLVLYSGLYSSLISFVAVQFIYRYMVLVNANLLESWFTGWKLVFWVFYVIFFGFAWSASVYFCLFPDTYSYNYIRTEFKDVYNIGVDRVAIFILVAYEKHPSSEEYKLRPASVIMIAGTISILVIQYSIMLFCGASMHRQMNEKLKNFSPDNQRLQKQFFKTLLLQISVPTVLFHMPIFPVLLGPFFNFEISAESGIIYSLFSLYPPIDGLIIMTVVTDYRIALTELFLGSHSGAQVEVIPVEVVSILNFSLL</sequence>
<keyword id="KW-1003">Cell membrane</keyword>
<keyword id="KW-0297">G-protein coupled receptor</keyword>
<keyword id="KW-0325">Glycoprotein</keyword>
<keyword id="KW-0472">Membrane</keyword>
<keyword id="KW-0675">Receptor</keyword>
<keyword id="KW-1185">Reference proteome</keyword>
<keyword id="KW-0807">Transducer</keyword>
<keyword id="KW-0812">Transmembrane</keyword>
<keyword id="KW-1133">Transmembrane helix</keyword>
<gene>
    <name evidence="6" type="primary">str-33</name>
    <name evidence="6" type="ORF">C24B9.1</name>
</gene>
<evidence type="ECO:0000255" key="1"/>
<evidence type="ECO:0000255" key="2">
    <source>
        <dbReference type="PROSITE-ProRule" id="PRU00498"/>
    </source>
</evidence>
<evidence type="ECO:0000269" key="3">
    <source>
    </source>
</evidence>
<evidence type="ECO:0000305" key="4"/>
<evidence type="ECO:0000312" key="5">
    <source>
        <dbReference type="Proteomes" id="UP000001940"/>
    </source>
</evidence>
<evidence type="ECO:0000312" key="6">
    <source>
        <dbReference type="WormBase" id="C24B9.1"/>
    </source>
</evidence>
<accession>O76437</accession>
<name>STR33_CAEEL</name>
<protein>
    <recommendedName>
        <fullName evidence="4">G-protein coupled receptor str-33</fullName>
    </recommendedName>
</protein>
<dbReference type="EMBL" id="BX284605">
    <property type="protein sequence ID" value="CCD65460.1"/>
    <property type="molecule type" value="Genomic_DNA"/>
</dbReference>
<dbReference type="PIR" id="T33264">
    <property type="entry name" value="T33264"/>
</dbReference>
<dbReference type="RefSeq" id="NP_503741.1">
    <property type="nucleotide sequence ID" value="NM_071340.1"/>
</dbReference>
<dbReference type="SMR" id="O76437"/>
<dbReference type="FunCoup" id="O76437">
    <property type="interactions" value="10"/>
</dbReference>
<dbReference type="STRING" id="6239.C24B9.1.1"/>
<dbReference type="PaxDb" id="6239-C24B9.1"/>
<dbReference type="EnsemblMetazoa" id="C24B9.1.1">
    <property type="protein sequence ID" value="C24B9.1.1"/>
    <property type="gene ID" value="WBGene00006099"/>
</dbReference>
<dbReference type="GeneID" id="191974"/>
<dbReference type="KEGG" id="cel:CELE_C24B9.1"/>
<dbReference type="UCSC" id="C24B9.1">
    <property type="organism name" value="c. elegans"/>
</dbReference>
<dbReference type="AGR" id="WB:WBGene00006099"/>
<dbReference type="CTD" id="191974"/>
<dbReference type="WormBase" id="C24B9.1">
    <property type="protein sequence ID" value="CE25785"/>
    <property type="gene ID" value="WBGene00006099"/>
    <property type="gene designation" value="str-33"/>
</dbReference>
<dbReference type="eggNOG" id="ENOG502TFP7">
    <property type="taxonomic scope" value="Eukaryota"/>
</dbReference>
<dbReference type="GeneTree" id="ENSGT00970000195831"/>
<dbReference type="HOGENOM" id="CLU_036335_4_2_1"/>
<dbReference type="InParanoid" id="O76437"/>
<dbReference type="OMA" id="SCTEMLA"/>
<dbReference type="OrthoDB" id="5845443at2759"/>
<dbReference type="PhylomeDB" id="O76437"/>
<dbReference type="Proteomes" id="UP000001940">
    <property type="component" value="Chromosome V"/>
</dbReference>
<dbReference type="GO" id="GO:0005886">
    <property type="term" value="C:plasma membrane"/>
    <property type="evidence" value="ECO:0007669"/>
    <property type="project" value="UniProtKB-SubCell"/>
</dbReference>
<dbReference type="GO" id="GO:0004930">
    <property type="term" value="F:G protein-coupled receptor activity"/>
    <property type="evidence" value="ECO:0007669"/>
    <property type="project" value="UniProtKB-KW"/>
</dbReference>
<dbReference type="InterPro" id="IPR019428">
    <property type="entry name" value="7TM_GPCR_serpentine_rcpt_Str"/>
</dbReference>
<dbReference type="PANTHER" id="PTHR46000:SF6">
    <property type="entry name" value="SEVEN TM RECEPTOR"/>
    <property type="match status" value="1"/>
</dbReference>
<dbReference type="PANTHER" id="PTHR46000">
    <property type="entry name" value="SEVEN TM RECEPTOR-RELATED"/>
    <property type="match status" value="1"/>
</dbReference>
<dbReference type="Pfam" id="PF10326">
    <property type="entry name" value="7TM_GPCR_Str"/>
    <property type="match status" value="1"/>
</dbReference>
<dbReference type="SUPFAM" id="SSF81321">
    <property type="entry name" value="Family A G protein-coupled receptor-like"/>
    <property type="match status" value="1"/>
</dbReference>
<comment type="function">
    <text evidence="3">Regulates egg-laying and locomotion (PubMed:21937442). Likely to act upstream of goa-1 to suppress 5-hydroxytryptamine (5-HT) biosynthesis in hermaphrodite-specific neurons (HSNs) through inhibition of tph-1 transcription (PubMed:21937442).</text>
</comment>
<comment type="subcellular location">
    <subcellularLocation>
        <location evidence="4">Cell membrane</location>
        <topology evidence="1">Multi-pass membrane protein</topology>
    </subcellularLocation>
</comment>
<comment type="tissue specificity">
    <text evidence="3">Detected in ALM and PLM mechanosensory neurons and head neurons.</text>
</comment>
<comment type="disruption phenotype">
    <text evidence="3">Locomotor defects with hypersinusoidal movement and frequent adoption of a spontaneous coiling state (PubMed:21937442). Mutants also display a hyperactive egg-laying phenotype in which worms are unable to properly inhibit egg laying, laying early stage eggs which results in the retention of fewer eggs (PubMed:21937442). Increased tph-1 expression in hermaphrodite-specific neurons (HSN) (PubMed:21937442).</text>
</comment>
<comment type="similarity">
    <text evidence="4">Belongs to the nematode receptor-like protein str family.</text>
</comment>
<feature type="chain" id="PRO_0000460464" description="G-protein coupled receptor str-33">
    <location>
        <begin position="1"/>
        <end position="345"/>
    </location>
</feature>
<feature type="topological domain" description="Extracellular" evidence="4">
    <location>
        <begin position="1"/>
        <end position="11"/>
    </location>
</feature>
<feature type="transmembrane region" description="Helical; Name=1" evidence="1">
    <location>
        <begin position="12"/>
        <end position="32"/>
    </location>
</feature>
<feature type="topological domain" description="Cytoplasmic" evidence="4">
    <location>
        <begin position="33"/>
        <end position="37"/>
    </location>
</feature>
<feature type="transmembrane region" description="Helical; Name=2" evidence="1">
    <location>
        <begin position="38"/>
        <end position="58"/>
    </location>
</feature>
<feature type="topological domain" description="Extracellular" evidence="4">
    <location>
        <begin position="59"/>
        <end position="92"/>
    </location>
</feature>
<feature type="transmembrane region" description="Helical; Name=3" evidence="1">
    <location>
        <begin position="93"/>
        <end position="113"/>
    </location>
</feature>
<feature type="topological domain" description="Cytoplasmic" evidence="4">
    <location>
        <begin position="114"/>
        <end position="133"/>
    </location>
</feature>
<feature type="transmembrane region" description="Helical; Name=4" evidence="1">
    <location>
        <begin position="134"/>
        <end position="154"/>
    </location>
</feature>
<feature type="topological domain" description="Extracellular" evidence="4">
    <location>
        <begin position="155"/>
        <end position="204"/>
    </location>
</feature>
<feature type="transmembrane region" description="Helical; Name=5" evidence="1">
    <location>
        <begin position="205"/>
        <end position="225"/>
    </location>
</feature>
<feature type="topological domain" description="Cytoplasmic" evidence="4">
    <location>
        <begin position="226"/>
        <end position="258"/>
    </location>
</feature>
<feature type="transmembrane region" description="Helical; Name=6" evidence="1">
    <location>
        <begin position="259"/>
        <end position="279"/>
    </location>
</feature>
<feature type="topological domain" description="Extracellular" evidence="4">
    <location>
        <begin position="280"/>
        <end position="288"/>
    </location>
</feature>
<feature type="transmembrane region" description="Helical; Name=7" evidence="1">
    <location>
        <begin position="289"/>
        <end position="309"/>
    </location>
</feature>
<feature type="topological domain" description="Cytoplasmic" evidence="4">
    <location>
        <begin position="310"/>
        <end position="345"/>
    </location>
</feature>
<feature type="glycosylation site" description="N-linked (GlcNAc...) asparagine" evidence="2">
    <location>
        <position position="71"/>
    </location>
</feature>